<organism>
    <name type="scientific">Corynebacterium jeikeium (strain K411)</name>
    <dbReference type="NCBI Taxonomy" id="306537"/>
    <lineage>
        <taxon>Bacteria</taxon>
        <taxon>Bacillati</taxon>
        <taxon>Actinomycetota</taxon>
        <taxon>Actinomycetes</taxon>
        <taxon>Mycobacteriales</taxon>
        <taxon>Corynebacteriaceae</taxon>
        <taxon>Corynebacterium</taxon>
    </lineage>
</organism>
<protein>
    <recommendedName>
        <fullName evidence="1">ATP synthase subunit b</fullName>
    </recommendedName>
    <alternativeName>
        <fullName evidence="1">ATP synthase F(0) sector subunit b</fullName>
    </alternativeName>
    <alternativeName>
        <fullName evidence="1">ATPase subunit I</fullName>
    </alternativeName>
    <alternativeName>
        <fullName evidence="1">F-type ATPase subunit b</fullName>
        <shortName evidence="1">F-ATPase subunit b</shortName>
    </alternativeName>
</protein>
<dbReference type="EMBL" id="CR931997">
    <property type="protein sequence ID" value="CAI37511.1"/>
    <property type="molecule type" value="Genomic_DNA"/>
</dbReference>
<dbReference type="RefSeq" id="WP_005292982.1">
    <property type="nucleotide sequence ID" value="NC_007164.1"/>
</dbReference>
<dbReference type="SMR" id="Q4JUJ6"/>
<dbReference type="STRING" id="306537.jk1339"/>
<dbReference type="GeneID" id="92738920"/>
<dbReference type="KEGG" id="cjk:jk1339"/>
<dbReference type="eggNOG" id="COG0711">
    <property type="taxonomic scope" value="Bacteria"/>
</dbReference>
<dbReference type="HOGENOM" id="CLU_079215_5_2_11"/>
<dbReference type="OrthoDB" id="5242917at2"/>
<dbReference type="Proteomes" id="UP000000545">
    <property type="component" value="Chromosome"/>
</dbReference>
<dbReference type="GO" id="GO:0005886">
    <property type="term" value="C:plasma membrane"/>
    <property type="evidence" value="ECO:0007669"/>
    <property type="project" value="UniProtKB-SubCell"/>
</dbReference>
<dbReference type="GO" id="GO:0045259">
    <property type="term" value="C:proton-transporting ATP synthase complex"/>
    <property type="evidence" value="ECO:0007669"/>
    <property type="project" value="UniProtKB-KW"/>
</dbReference>
<dbReference type="GO" id="GO:0046933">
    <property type="term" value="F:proton-transporting ATP synthase activity, rotational mechanism"/>
    <property type="evidence" value="ECO:0007669"/>
    <property type="project" value="UniProtKB-UniRule"/>
</dbReference>
<dbReference type="GO" id="GO:0046961">
    <property type="term" value="F:proton-transporting ATPase activity, rotational mechanism"/>
    <property type="evidence" value="ECO:0007669"/>
    <property type="project" value="TreeGrafter"/>
</dbReference>
<dbReference type="CDD" id="cd06503">
    <property type="entry name" value="ATP-synt_Fo_b"/>
    <property type="match status" value="1"/>
</dbReference>
<dbReference type="Gene3D" id="1.20.5.620">
    <property type="entry name" value="F1F0 ATP synthase subunit B, membrane domain"/>
    <property type="match status" value="1"/>
</dbReference>
<dbReference type="HAMAP" id="MF_01398">
    <property type="entry name" value="ATP_synth_b_bprime"/>
    <property type="match status" value="1"/>
</dbReference>
<dbReference type="InterPro" id="IPR028987">
    <property type="entry name" value="ATP_synth_B-like_membr_sf"/>
</dbReference>
<dbReference type="InterPro" id="IPR002146">
    <property type="entry name" value="ATP_synth_b/b'su_bac/chlpt"/>
</dbReference>
<dbReference type="InterPro" id="IPR005864">
    <property type="entry name" value="ATP_synth_F0_bsu_bac"/>
</dbReference>
<dbReference type="InterPro" id="IPR050059">
    <property type="entry name" value="ATP_synthase_B_chain"/>
</dbReference>
<dbReference type="NCBIfam" id="TIGR01144">
    <property type="entry name" value="ATP_synt_b"/>
    <property type="match status" value="1"/>
</dbReference>
<dbReference type="NCBIfam" id="NF004412">
    <property type="entry name" value="PRK05759.1-3"/>
    <property type="match status" value="1"/>
</dbReference>
<dbReference type="PANTHER" id="PTHR33445:SF1">
    <property type="entry name" value="ATP SYNTHASE SUBUNIT B"/>
    <property type="match status" value="1"/>
</dbReference>
<dbReference type="PANTHER" id="PTHR33445">
    <property type="entry name" value="ATP SYNTHASE SUBUNIT B', CHLOROPLASTIC"/>
    <property type="match status" value="1"/>
</dbReference>
<dbReference type="Pfam" id="PF00430">
    <property type="entry name" value="ATP-synt_B"/>
    <property type="match status" value="1"/>
</dbReference>
<dbReference type="SUPFAM" id="SSF81573">
    <property type="entry name" value="F1F0 ATP synthase subunit B, membrane domain"/>
    <property type="match status" value="1"/>
</dbReference>
<gene>
    <name evidence="1" type="primary">atpF</name>
    <name type="ordered locus">jk1339</name>
</gene>
<proteinExistence type="inferred from homology"/>
<comment type="function">
    <text evidence="1">F(1)F(0) ATP synthase produces ATP from ADP in the presence of a proton or sodium gradient. F-type ATPases consist of two structural domains, F(1) containing the extramembraneous catalytic core and F(0) containing the membrane proton channel, linked together by a central stalk and a peripheral stalk. During catalysis, ATP synthesis in the catalytic domain of F(1) is coupled via a rotary mechanism of the central stalk subunits to proton translocation.</text>
</comment>
<comment type="function">
    <text evidence="1">Component of the F(0) channel, it forms part of the peripheral stalk, linking F(1) to F(0).</text>
</comment>
<comment type="subunit">
    <text evidence="1">F-type ATPases have 2 components, F(1) - the catalytic core - and F(0) - the membrane proton channel. F(1) has five subunits: alpha(3), beta(3), gamma(1), delta(1), epsilon(1). F(0) has three main subunits: a(1), b(2) and c(10-14). The alpha and beta chains form an alternating ring which encloses part of the gamma chain. F(1) is attached to F(0) by a central stalk formed by the gamma and epsilon chains, while a peripheral stalk is formed by the delta and b chains.</text>
</comment>
<comment type="subcellular location">
    <subcellularLocation>
        <location evidence="1">Cell membrane</location>
        <topology evidence="1">Single-pass membrane protein</topology>
    </subcellularLocation>
</comment>
<comment type="similarity">
    <text evidence="1">Belongs to the ATPase B chain family.</text>
</comment>
<evidence type="ECO:0000255" key="1">
    <source>
        <dbReference type="HAMAP-Rule" id="MF_01398"/>
    </source>
</evidence>
<sequence length="186" mass="20656">MTNTFLLAAEKLPMEESVNPLIPPLYDIVWSIIPFAVILFVFWKFVLPKFQEVLNQREDQIEGGIRRAESAQAEAKAALEKYNAQLAEARTEAAQIRDDARSQGQKIIADMKAQATEESNRIVESGHKQLEAQRSAVVTDLRKEMGENSINLAERLLGEQLSDDVKRSGTIDNFLAGLDNVGASGK</sequence>
<reference key="1">
    <citation type="journal article" date="2005" name="J. Bacteriol.">
        <title>Complete genome sequence and analysis of the multiresistant nosocomial pathogen Corynebacterium jeikeium K411, a lipid-requiring bacterium of the human skin flora.</title>
        <authorList>
            <person name="Tauch A."/>
            <person name="Kaiser O."/>
            <person name="Hain T."/>
            <person name="Goesmann A."/>
            <person name="Weisshaar B."/>
            <person name="Albersmeier A."/>
            <person name="Bekel T."/>
            <person name="Bischoff N."/>
            <person name="Brune I."/>
            <person name="Chakraborty T."/>
            <person name="Kalinowski J."/>
            <person name="Meyer F."/>
            <person name="Rupp O."/>
            <person name="Schneiker S."/>
            <person name="Viehoever P."/>
            <person name="Puehler A."/>
        </authorList>
    </citation>
    <scope>NUCLEOTIDE SEQUENCE [LARGE SCALE GENOMIC DNA]</scope>
    <source>
        <strain>K411</strain>
    </source>
</reference>
<keyword id="KW-0066">ATP synthesis</keyword>
<keyword id="KW-1003">Cell membrane</keyword>
<keyword id="KW-0138">CF(0)</keyword>
<keyword id="KW-0375">Hydrogen ion transport</keyword>
<keyword id="KW-0406">Ion transport</keyword>
<keyword id="KW-0472">Membrane</keyword>
<keyword id="KW-1185">Reference proteome</keyword>
<keyword id="KW-0812">Transmembrane</keyword>
<keyword id="KW-1133">Transmembrane helix</keyword>
<keyword id="KW-0813">Transport</keyword>
<feature type="chain" id="PRO_0000368440" description="ATP synthase subunit b">
    <location>
        <begin position="1"/>
        <end position="186"/>
    </location>
</feature>
<feature type="transmembrane region" description="Helical" evidence="1">
    <location>
        <begin position="28"/>
        <end position="48"/>
    </location>
</feature>
<name>ATPF_CORJK</name>
<accession>Q4JUJ6</accession>